<accession>A0RBX4</accession>
<proteinExistence type="inferred from homology"/>
<protein>
    <recommendedName>
        <fullName evidence="1">UPF0302 protein BALH_1374</fullName>
    </recommendedName>
</protein>
<name>Y1374_BACAH</name>
<dbReference type="EMBL" id="CP000485">
    <property type="protein sequence ID" value="ABK84717.1"/>
    <property type="molecule type" value="Genomic_DNA"/>
</dbReference>
<dbReference type="RefSeq" id="WP_001095923.1">
    <property type="nucleotide sequence ID" value="NC_008600.1"/>
</dbReference>
<dbReference type="SMR" id="A0RBX4"/>
<dbReference type="KEGG" id="btl:BALH_1374"/>
<dbReference type="HOGENOM" id="CLU_126019_0_0_9"/>
<dbReference type="Gene3D" id="3.40.1530.30">
    <property type="entry name" value="Uncharacterised family UPF0302, N-terminal domain"/>
    <property type="match status" value="1"/>
</dbReference>
<dbReference type="Gene3D" id="4.10.810.10">
    <property type="entry name" value="Virus Scaffolding Protein, Chain A"/>
    <property type="match status" value="1"/>
</dbReference>
<dbReference type="HAMAP" id="MF_00760">
    <property type="entry name" value="UPF0302"/>
    <property type="match status" value="1"/>
</dbReference>
<dbReference type="InterPro" id="IPR014957">
    <property type="entry name" value="IDEAL_dom"/>
</dbReference>
<dbReference type="InterPro" id="IPR011188">
    <property type="entry name" value="UPF0302"/>
</dbReference>
<dbReference type="InterPro" id="IPR014963">
    <property type="entry name" value="UPF0302_N"/>
</dbReference>
<dbReference type="InterPro" id="IPR038091">
    <property type="entry name" value="UPF0302_N_sf"/>
</dbReference>
<dbReference type="InterPro" id="IPR027393">
    <property type="entry name" value="Virus_scaffolding_prot_C"/>
</dbReference>
<dbReference type="NCBIfam" id="NF002965">
    <property type="entry name" value="PRK03636.1"/>
    <property type="match status" value="1"/>
</dbReference>
<dbReference type="Pfam" id="PF08858">
    <property type="entry name" value="IDEAL"/>
    <property type="match status" value="1"/>
</dbReference>
<dbReference type="Pfam" id="PF08864">
    <property type="entry name" value="UPF0302"/>
    <property type="match status" value="1"/>
</dbReference>
<dbReference type="PIRSF" id="PIRSF007165">
    <property type="entry name" value="UCP007165"/>
    <property type="match status" value="1"/>
</dbReference>
<dbReference type="SMART" id="SM00914">
    <property type="entry name" value="IDEAL"/>
    <property type="match status" value="1"/>
</dbReference>
<comment type="similarity">
    <text evidence="1">Belongs to the UPF0302 family.</text>
</comment>
<evidence type="ECO:0000255" key="1">
    <source>
        <dbReference type="HAMAP-Rule" id="MF_00760"/>
    </source>
</evidence>
<feature type="chain" id="PRO_1000046723" description="UPF0302 protein BALH_1374">
    <location>
        <begin position="1"/>
        <end position="178"/>
    </location>
</feature>
<gene>
    <name type="ordered locus">BALH_1374</name>
</gene>
<reference key="1">
    <citation type="journal article" date="2007" name="J. Bacteriol.">
        <title>The complete genome sequence of Bacillus thuringiensis Al Hakam.</title>
        <authorList>
            <person name="Challacombe J.F."/>
            <person name="Altherr M.R."/>
            <person name="Xie G."/>
            <person name="Bhotika S.S."/>
            <person name="Brown N."/>
            <person name="Bruce D."/>
            <person name="Campbell C.S."/>
            <person name="Campbell M.L."/>
            <person name="Chen J."/>
            <person name="Chertkov O."/>
            <person name="Cleland C."/>
            <person name="Dimitrijevic M."/>
            <person name="Doggett N.A."/>
            <person name="Fawcett J.J."/>
            <person name="Glavina T."/>
            <person name="Goodwin L.A."/>
            <person name="Green L.D."/>
            <person name="Han C.S."/>
            <person name="Hill K.K."/>
            <person name="Hitchcock P."/>
            <person name="Jackson P.J."/>
            <person name="Keim P."/>
            <person name="Kewalramani A.R."/>
            <person name="Longmire J."/>
            <person name="Lucas S."/>
            <person name="Malfatti S."/>
            <person name="Martinez D."/>
            <person name="McMurry K."/>
            <person name="Meincke L.J."/>
            <person name="Misra M."/>
            <person name="Moseman B.L."/>
            <person name="Mundt M."/>
            <person name="Munk A.C."/>
            <person name="Okinaka R.T."/>
            <person name="Parson-Quintana B."/>
            <person name="Reilly L.P."/>
            <person name="Richardson P."/>
            <person name="Robinson D.L."/>
            <person name="Saunders E."/>
            <person name="Tapia R."/>
            <person name="Tesmer J.G."/>
            <person name="Thayer N."/>
            <person name="Thompson L.S."/>
            <person name="Tice H."/>
            <person name="Ticknor L.O."/>
            <person name="Wills P.L."/>
            <person name="Gilna P."/>
            <person name="Brettin T.S."/>
        </authorList>
    </citation>
    <scope>NUCLEOTIDE SEQUENCE [LARGE SCALE GENOMIC DNA]</scope>
    <source>
        <strain>Al Hakam</strain>
    </source>
</reference>
<organism>
    <name type="scientific">Bacillus thuringiensis (strain Al Hakam)</name>
    <dbReference type="NCBI Taxonomy" id="412694"/>
    <lineage>
        <taxon>Bacteria</taxon>
        <taxon>Bacillati</taxon>
        <taxon>Bacillota</taxon>
        <taxon>Bacilli</taxon>
        <taxon>Bacillales</taxon>
        <taxon>Bacillaceae</taxon>
        <taxon>Bacillus</taxon>
        <taxon>Bacillus cereus group</taxon>
    </lineage>
</organism>
<sequence>MNTPVSVNEKKDFVKWFLNNYQLKQRECVWILNYLMSHDQLMHKVHFVEHAKYCPRGLVMSANCVKDTPFHFFKQNVMTTDAEKSFHDIRLNRDEDIYIQLNFKSSFQNANYVAVLEENPYLPKHIEVNEKDRLLAERFLEESVFSFRRERLLKQIDEALDKQDKEAFHRLTAELKML</sequence>